<evidence type="ECO:0000255" key="1">
    <source>
        <dbReference type="HAMAP-Rule" id="MF_01031"/>
    </source>
</evidence>
<proteinExistence type="inferred from homology"/>
<protein>
    <recommendedName>
        <fullName evidence="1">3-isopropylmalate dehydratase small subunit</fullName>
        <ecNumber evidence="1">4.2.1.33</ecNumber>
    </recommendedName>
    <alternativeName>
        <fullName evidence="1">Alpha-IPM isomerase</fullName>
        <shortName evidence="1">IPMI</shortName>
    </alternativeName>
    <alternativeName>
        <fullName evidence="1">Isopropylmalate isomerase</fullName>
    </alternativeName>
</protein>
<sequence length="190" mass="21536">MAAIKPITTYKGKIVPLFNDNIDTDQIIPKVHLKRISKSGFGPFAFDEWRYLPDGSDNPDFNPNKPQYKGASILITGDNFGCGSSREHAAWALKDYGFHIIIAGSFSDIFYMNCTKNAMLPIVLEKNAREHLAKYVEIEVDLPNQTVSSPDKSFHFEIDETWKNKLVNGLDDIAITLQYESLIEKYEKSL</sequence>
<organism>
    <name type="scientific">Staphylococcus aureus (strain MRSA252)</name>
    <dbReference type="NCBI Taxonomy" id="282458"/>
    <lineage>
        <taxon>Bacteria</taxon>
        <taxon>Bacillati</taxon>
        <taxon>Bacillota</taxon>
        <taxon>Bacilli</taxon>
        <taxon>Bacillales</taxon>
        <taxon>Staphylococcaceae</taxon>
        <taxon>Staphylococcus</taxon>
    </lineage>
</organism>
<comment type="function">
    <text evidence="1">Catalyzes the isomerization between 2-isopropylmalate and 3-isopropylmalate, via the formation of 2-isopropylmaleate.</text>
</comment>
<comment type="catalytic activity">
    <reaction evidence="1">
        <text>(2R,3S)-3-isopropylmalate = (2S)-2-isopropylmalate</text>
        <dbReference type="Rhea" id="RHEA:32287"/>
        <dbReference type="ChEBI" id="CHEBI:1178"/>
        <dbReference type="ChEBI" id="CHEBI:35121"/>
        <dbReference type="EC" id="4.2.1.33"/>
    </reaction>
</comment>
<comment type="pathway">
    <text evidence="1">Amino-acid biosynthesis; L-leucine biosynthesis; L-leucine from 3-methyl-2-oxobutanoate: step 2/4.</text>
</comment>
<comment type="subunit">
    <text evidence="1">Heterodimer of LeuC and LeuD.</text>
</comment>
<comment type="similarity">
    <text evidence="1">Belongs to the LeuD family. LeuD type 1 subfamily.</text>
</comment>
<accession>Q6GF13</accession>
<reference key="1">
    <citation type="journal article" date="2004" name="Proc. Natl. Acad. Sci. U.S.A.">
        <title>Complete genomes of two clinical Staphylococcus aureus strains: evidence for the rapid evolution of virulence and drug resistance.</title>
        <authorList>
            <person name="Holden M.T.G."/>
            <person name="Feil E.J."/>
            <person name="Lindsay J.A."/>
            <person name="Peacock S.J."/>
            <person name="Day N.P.J."/>
            <person name="Enright M.C."/>
            <person name="Foster T.J."/>
            <person name="Moore C.E."/>
            <person name="Hurst L."/>
            <person name="Atkin R."/>
            <person name="Barron A."/>
            <person name="Bason N."/>
            <person name="Bentley S.D."/>
            <person name="Chillingworth C."/>
            <person name="Chillingworth T."/>
            <person name="Churcher C."/>
            <person name="Clark L."/>
            <person name="Corton C."/>
            <person name="Cronin A."/>
            <person name="Doggett J."/>
            <person name="Dowd L."/>
            <person name="Feltwell T."/>
            <person name="Hance Z."/>
            <person name="Harris B."/>
            <person name="Hauser H."/>
            <person name="Holroyd S."/>
            <person name="Jagels K."/>
            <person name="James K.D."/>
            <person name="Lennard N."/>
            <person name="Line A."/>
            <person name="Mayes R."/>
            <person name="Moule S."/>
            <person name="Mungall K."/>
            <person name="Ormond D."/>
            <person name="Quail M.A."/>
            <person name="Rabbinowitsch E."/>
            <person name="Rutherford K.M."/>
            <person name="Sanders M."/>
            <person name="Sharp S."/>
            <person name="Simmonds M."/>
            <person name="Stevens K."/>
            <person name="Whitehead S."/>
            <person name="Barrell B.G."/>
            <person name="Spratt B.G."/>
            <person name="Parkhill J."/>
        </authorList>
    </citation>
    <scope>NUCLEOTIDE SEQUENCE [LARGE SCALE GENOMIC DNA]</scope>
    <source>
        <strain>MRSA252</strain>
    </source>
</reference>
<keyword id="KW-0028">Amino-acid biosynthesis</keyword>
<keyword id="KW-0100">Branched-chain amino acid biosynthesis</keyword>
<keyword id="KW-0432">Leucine biosynthesis</keyword>
<keyword id="KW-0456">Lyase</keyword>
<feature type="chain" id="PRO_0000141884" description="3-isopropylmalate dehydratase small subunit">
    <location>
        <begin position="1"/>
        <end position="190"/>
    </location>
</feature>
<gene>
    <name evidence="1" type="primary">leuD</name>
    <name type="ordered locus">SAR2147</name>
</gene>
<name>LEUD_STAAR</name>
<dbReference type="EC" id="4.2.1.33" evidence="1"/>
<dbReference type="EMBL" id="BX571856">
    <property type="protein sequence ID" value="CAG41128.1"/>
    <property type="molecule type" value="Genomic_DNA"/>
</dbReference>
<dbReference type="RefSeq" id="WP_000718949.1">
    <property type="nucleotide sequence ID" value="NC_002952.2"/>
</dbReference>
<dbReference type="SMR" id="Q6GF13"/>
<dbReference type="KEGG" id="sar:SAR2147"/>
<dbReference type="HOGENOM" id="CLU_081378_0_3_9"/>
<dbReference type="UniPathway" id="UPA00048">
    <property type="reaction ID" value="UER00071"/>
</dbReference>
<dbReference type="Proteomes" id="UP000000596">
    <property type="component" value="Chromosome"/>
</dbReference>
<dbReference type="GO" id="GO:0009316">
    <property type="term" value="C:3-isopropylmalate dehydratase complex"/>
    <property type="evidence" value="ECO:0007669"/>
    <property type="project" value="InterPro"/>
</dbReference>
<dbReference type="GO" id="GO:0003861">
    <property type="term" value="F:3-isopropylmalate dehydratase activity"/>
    <property type="evidence" value="ECO:0007669"/>
    <property type="project" value="UniProtKB-UniRule"/>
</dbReference>
<dbReference type="GO" id="GO:0009098">
    <property type="term" value="P:L-leucine biosynthetic process"/>
    <property type="evidence" value="ECO:0007669"/>
    <property type="project" value="UniProtKB-UniRule"/>
</dbReference>
<dbReference type="CDD" id="cd01577">
    <property type="entry name" value="IPMI_Swivel"/>
    <property type="match status" value="1"/>
</dbReference>
<dbReference type="FunFam" id="3.20.19.10:FF:000003">
    <property type="entry name" value="3-isopropylmalate dehydratase small subunit"/>
    <property type="match status" value="1"/>
</dbReference>
<dbReference type="Gene3D" id="3.20.19.10">
    <property type="entry name" value="Aconitase, domain 4"/>
    <property type="match status" value="1"/>
</dbReference>
<dbReference type="HAMAP" id="MF_01031">
    <property type="entry name" value="LeuD_type1"/>
    <property type="match status" value="1"/>
</dbReference>
<dbReference type="InterPro" id="IPR004431">
    <property type="entry name" value="3-IsopropMal_deHydase_ssu"/>
</dbReference>
<dbReference type="InterPro" id="IPR015928">
    <property type="entry name" value="Aconitase/3IPM_dehydase_swvl"/>
</dbReference>
<dbReference type="InterPro" id="IPR000573">
    <property type="entry name" value="AconitaseA/IPMdHydase_ssu_swvl"/>
</dbReference>
<dbReference type="InterPro" id="IPR033940">
    <property type="entry name" value="IPMI_Swivel"/>
</dbReference>
<dbReference type="InterPro" id="IPR050075">
    <property type="entry name" value="LeuD"/>
</dbReference>
<dbReference type="NCBIfam" id="TIGR00171">
    <property type="entry name" value="leuD"/>
    <property type="match status" value="1"/>
</dbReference>
<dbReference type="NCBIfam" id="NF002458">
    <property type="entry name" value="PRK01641.1"/>
    <property type="match status" value="1"/>
</dbReference>
<dbReference type="PANTHER" id="PTHR43345:SF5">
    <property type="entry name" value="3-ISOPROPYLMALATE DEHYDRATASE SMALL SUBUNIT"/>
    <property type="match status" value="1"/>
</dbReference>
<dbReference type="PANTHER" id="PTHR43345">
    <property type="entry name" value="3-ISOPROPYLMALATE DEHYDRATASE SMALL SUBUNIT 2-RELATED-RELATED"/>
    <property type="match status" value="1"/>
</dbReference>
<dbReference type="Pfam" id="PF00694">
    <property type="entry name" value="Aconitase_C"/>
    <property type="match status" value="1"/>
</dbReference>
<dbReference type="SUPFAM" id="SSF52016">
    <property type="entry name" value="LeuD/IlvD-like"/>
    <property type="match status" value="1"/>
</dbReference>